<dbReference type="EMBL" id="AK314206">
    <property type="protein sequence ID" value="BAG36882.1"/>
    <property type="status" value="ALT_INIT"/>
    <property type="molecule type" value="mRNA"/>
</dbReference>
<dbReference type="EMBL" id="AL132795">
    <property type="status" value="NOT_ANNOTATED_CDS"/>
    <property type="molecule type" value="Genomic_DNA"/>
</dbReference>
<dbReference type="EMBL" id="KF458260">
    <property type="status" value="NOT_ANNOTATED_CDS"/>
    <property type="molecule type" value="Genomic_DNA"/>
</dbReference>
<dbReference type="EMBL" id="CH471051">
    <property type="protein sequence ID" value="EAW48216.1"/>
    <property type="status" value="ALT_SEQ"/>
    <property type="molecule type" value="Genomic_DNA"/>
</dbReference>
<dbReference type="EMBL" id="BC047409">
    <property type="protein sequence ID" value="AAH47409.1"/>
    <property type="molecule type" value="mRNA"/>
</dbReference>
<dbReference type="EMBL" id="AF005361">
    <property type="protein sequence ID" value="AAC51868.1"/>
    <property type="status" value="ALT_INIT"/>
    <property type="molecule type" value="mRNA"/>
</dbReference>
<dbReference type="CCDS" id="CCDS5111.1"/>
<dbReference type="RefSeq" id="NP_001353235.1">
    <property type="nucleotide sequence ID" value="NM_001366306.2"/>
</dbReference>
<dbReference type="RefSeq" id="NP_002260.2">
    <property type="nucleotide sequence ID" value="NM_002269.2"/>
</dbReference>
<dbReference type="RefSeq" id="XP_016866328.1">
    <property type="nucleotide sequence ID" value="XM_017010839.1"/>
</dbReference>
<dbReference type="RefSeq" id="XP_016866329.1">
    <property type="nucleotide sequence ID" value="XM_017010840.1"/>
</dbReference>
<dbReference type="PDB" id="4U2X">
    <property type="method" value="X-ray"/>
    <property type="resolution" value="3.15 A"/>
    <property type="chains" value="D/E/F=332-506"/>
</dbReference>
<dbReference type="PDBsum" id="4U2X"/>
<dbReference type="SMR" id="O15131"/>
<dbReference type="BioGRID" id="110039">
    <property type="interactions" value="108"/>
</dbReference>
<dbReference type="ComplexPortal" id="CPX-1063">
    <property type="entry name" value="Importin complex, KPNA5 variant"/>
</dbReference>
<dbReference type="DIP" id="DIP-33405N"/>
<dbReference type="ELM" id="O15131"/>
<dbReference type="FunCoup" id="O15131">
    <property type="interactions" value="1874"/>
</dbReference>
<dbReference type="IntAct" id="O15131">
    <property type="interactions" value="62"/>
</dbReference>
<dbReference type="MINT" id="O15131"/>
<dbReference type="STRING" id="9606.ENSP00000357552"/>
<dbReference type="TCDB" id="1.I.1.1.3">
    <property type="family name" value="the nuclear pore complex (npc) family"/>
</dbReference>
<dbReference type="iPTMnet" id="O15131"/>
<dbReference type="PhosphoSitePlus" id="O15131"/>
<dbReference type="SwissPalm" id="O15131"/>
<dbReference type="BioMuta" id="KPNA5"/>
<dbReference type="jPOST" id="O15131"/>
<dbReference type="MassIVE" id="O15131"/>
<dbReference type="PaxDb" id="9606-ENSP00000357552"/>
<dbReference type="PeptideAtlas" id="O15131"/>
<dbReference type="ProteomicsDB" id="48467"/>
<dbReference type="Pumba" id="O15131"/>
<dbReference type="Antibodypedia" id="32522">
    <property type="antibodies" value="248 antibodies from 31 providers"/>
</dbReference>
<dbReference type="DNASU" id="3841"/>
<dbReference type="Ensembl" id="ENST00000356348.6">
    <property type="protein sequence ID" value="ENSP00000348704.1"/>
    <property type="gene ID" value="ENSG00000196911.12"/>
</dbReference>
<dbReference type="Ensembl" id="ENST00000368564.7">
    <property type="protein sequence ID" value="ENSP00000357552.1"/>
    <property type="gene ID" value="ENSG00000196911.12"/>
</dbReference>
<dbReference type="GeneID" id="3841"/>
<dbReference type="KEGG" id="hsa:3841"/>
<dbReference type="MANE-Select" id="ENST00000368564.7">
    <property type="protein sequence ID" value="ENSP00000357552.1"/>
    <property type="RefSeq nucleotide sequence ID" value="NM_001366306.2"/>
    <property type="RefSeq protein sequence ID" value="NP_001353235.1"/>
</dbReference>
<dbReference type="UCSC" id="uc003pxh.4">
    <property type="organism name" value="human"/>
</dbReference>
<dbReference type="AGR" id="HGNC:6398"/>
<dbReference type="CTD" id="3841"/>
<dbReference type="DisGeNET" id="3841"/>
<dbReference type="GeneCards" id="KPNA5"/>
<dbReference type="HGNC" id="HGNC:6398">
    <property type="gene designation" value="KPNA5"/>
</dbReference>
<dbReference type="HPA" id="ENSG00000196911">
    <property type="expression patterns" value="Tissue enhanced (testis)"/>
</dbReference>
<dbReference type="MIM" id="604545">
    <property type="type" value="gene"/>
</dbReference>
<dbReference type="neXtProt" id="NX_O15131"/>
<dbReference type="OpenTargets" id="ENSG00000196911"/>
<dbReference type="PharmGKB" id="PA30189"/>
<dbReference type="VEuPathDB" id="HostDB:ENSG00000196911"/>
<dbReference type="eggNOG" id="KOG0166">
    <property type="taxonomic scope" value="Eukaryota"/>
</dbReference>
<dbReference type="GeneTree" id="ENSGT01050000244950"/>
<dbReference type="HOGENOM" id="CLU_018084_6_0_1"/>
<dbReference type="InParanoid" id="O15131"/>
<dbReference type="OMA" id="NWSTISV"/>
<dbReference type="OrthoDB" id="29145at2759"/>
<dbReference type="PAN-GO" id="O15131">
    <property type="GO annotations" value="5 GO annotations based on evolutionary models"/>
</dbReference>
<dbReference type="PhylomeDB" id="O15131"/>
<dbReference type="TreeFam" id="TF354205"/>
<dbReference type="PathwayCommons" id="O15131"/>
<dbReference type="Reactome" id="R-HSA-1169408">
    <property type="pathway name" value="ISG15 antiviral mechanism"/>
</dbReference>
<dbReference type="Reactome" id="R-HSA-168276">
    <property type="pathway name" value="NS1 Mediated Effects on Host Pathways"/>
</dbReference>
<dbReference type="SignaLink" id="O15131"/>
<dbReference type="BioGRID-ORCS" id="3841">
    <property type="hits" value="14 hits in 1162 CRISPR screens"/>
</dbReference>
<dbReference type="CD-CODE" id="DEE660B4">
    <property type="entry name" value="Stress granule"/>
</dbReference>
<dbReference type="ChiTaRS" id="KPNA5">
    <property type="organism name" value="human"/>
</dbReference>
<dbReference type="EvolutionaryTrace" id="O15131"/>
<dbReference type="GeneWiki" id="KPNA5"/>
<dbReference type="GenomeRNAi" id="3841"/>
<dbReference type="Pharos" id="O15131">
    <property type="development level" value="Tbio"/>
</dbReference>
<dbReference type="PRO" id="PR:O15131"/>
<dbReference type="Proteomes" id="UP000005640">
    <property type="component" value="Chromosome 6"/>
</dbReference>
<dbReference type="RNAct" id="O15131">
    <property type="molecule type" value="protein"/>
</dbReference>
<dbReference type="Bgee" id="ENSG00000196911">
    <property type="expression patterns" value="Expressed in calcaneal tendon and 193 other cell types or tissues"/>
</dbReference>
<dbReference type="ExpressionAtlas" id="O15131">
    <property type="expression patterns" value="baseline and differential"/>
</dbReference>
<dbReference type="GO" id="GO:0005829">
    <property type="term" value="C:cytosol"/>
    <property type="evidence" value="ECO:0000314"/>
    <property type="project" value="HPA"/>
</dbReference>
<dbReference type="GO" id="GO:0042564">
    <property type="term" value="C:NLS-dependent protein nuclear import complex"/>
    <property type="evidence" value="ECO:0000250"/>
    <property type="project" value="ComplexPortal"/>
</dbReference>
<dbReference type="GO" id="GO:0005654">
    <property type="term" value="C:nucleoplasm"/>
    <property type="evidence" value="ECO:0000318"/>
    <property type="project" value="GO_Central"/>
</dbReference>
<dbReference type="GO" id="GO:0005634">
    <property type="term" value="C:nucleus"/>
    <property type="evidence" value="ECO:0000318"/>
    <property type="project" value="GO_Central"/>
</dbReference>
<dbReference type="GO" id="GO:0061608">
    <property type="term" value="F:nuclear import signal receptor activity"/>
    <property type="evidence" value="ECO:0000318"/>
    <property type="project" value="GO_Central"/>
</dbReference>
<dbReference type="GO" id="GO:0008139">
    <property type="term" value="F:nuclear localization sequence binding"/>
    <property type="evidence" value="ECO:0000318"/>
    <property type="project" value="GO_Central"/>
</dbReference>
<dbReference type="GO" id="GO:0006607">
    <property type="term" value="P:NLS-bearing protein import into nucleus"/>
    <property type="evidence" value="ECO:0000318"/>
    <property type="project" value="GO_Central"/>
</dbReference>
<dbReference type="GO" id="GO:0006606">
    <property type="term" value="P:protein import into nucleus"/>
    <property type="evidence" value="ECO:0000250"/>
    <property type="project" value="ComplexPortal"/>
</dbReference>
<dbReference type="FunFam" id="1.20.5.690:FF:000001">
    <property type="entry name" value="Importin subunit alpha"/>
    <property type="match status" value="1"/>
</dbReference>
<dbReference type="FunFam" id="1.25.10.10:FF:000013">
    <property type="entry name" value="Importin subunit alpha"/>
    <property type="match status" value="1"/>
</dbReference>
<dbReference type="Gene3D" id="1.20.5.690">
    <property type="entry name" value="Importin-alpha, importin-beta-binding domain"/>
    <property type="match status" value="1"/>
</dbReference>
<dbReference type="Gene3D" id="1.25.10.10">
    <property type="entry name" value="Leucine-rich Repeat Variant"/>
    <property type="match status" value="1"/>
</dbReference>
<dbReference type="InterPro" id="IPR011989">
    <property type="entry name" value="ARM-like"/>
</dbReference>
<dbReference type="InterPro" id="IPR016024">
    <property type="entry name" value="ARM-type_fold"/>
</dbReference>
<dbReference type="InterPro" id="IPR032413">
    <property type="entry name" value="Arm_3"/>
</dbReference>
<dbReference type="InterPro" id="IPR000225">
    <property type="entry name" value="Armadillo"/>
</dbReference>
<dbReference type="InterPro" id="IPR002652">
    <property type="entry name" value="Importin-a_IBB"/>
</dbReference>
<dbReference type="InterPro" id="IPR036975">
    <property type="entry name" value="Importin-a_IBB_sf"/>
</dbReference>
<dbReference type="InterPro" id="IPR024931">
    <property type="entry name" value="Importin_alpha"/>
</dbReference>
<dbReference type="PANTHER" id="PTHR23316">
    <property type="entry name" value="IMPORTIN ALPHA"/>
    <property type="match status" value="1"/>
</dbReference>
<dbReference type="Pfam" id="PF00514">
    <property type="entry name" value="Arm"/>
    <property type="match status" value="8"/>
</dbReference>
<dbReference type="Pfam" id="PF16186">
    <property type="entry name" value="Arm_3"/>
    <property type="match status" value="1"/>
</dbReference>
<dbReference type="Pfam" id="PF01749">
    <property type="entry name" value="IBB"/>
    <property type="match status" value="1"/>
</dbReference>
<dbReference type="PIRSF" id="PIRSF005673">
    <property type="entry name" value="Importin_alpha"/>
    <property type="match status" value="1"/>
</dbReference>
<dbReference type="SMART" id="SM00185">
    <property type="entry name" value="ARM"/>
    <property type="match status" value="8"/>
</dbReference>
<dbReference type="SUPFAM" id="SSF48371">
    <property type="entry name" value="ARM repeat"/>
    <property type="match status" value="1"/>
</dbReference>
<dbReference type="PROSITE" id="PS50176">
    <property type="entry name" value="ARM_REPEAT"/>
    <property type="match status" value="2"/>
</dbReference>
<dbReference type="PROSITE" id="PS51214">
    <property type="entry name" value="IBB"/>
    <property type="match status" value="1"/>
</dbReference>
<sequence length="539" mass="60666">MDAMASPGKDNYRMKSYKNKALNPQEMRRRREEEGIQLRKQKREEQLFKRRNVYLPRNDESMLESPIQDPDISSTVPIPEEEVVTTDMVQMIFSNNADQQLTATQKFRKLLSKEPNPPIDQVIQKPGVVQRFVKFLERNENCTLQFEAAWALTNIASGTFLHTKVVIETGAVPIFIKLLNSEHEDVQEQAVWALGNIAGDNAECRDFVLNCEILPPLLELLTNSNRLTTTRNAVWALSNLCRGKNPPPNFSKVSPCLNVLSRLLFSSDPDVLADVCWALSYLSDGPNDKIQAVIDSGVCRRLVELLMHNDYKVVSPALRAVGNIVTGDDIQTQVILNCSALPCLLHLLSSPKESIRKEACWTVSNITAGNRAQIQAVIDANIFPVLIEILQKAEFRTRKEAAWAITNATSGGTPEQIRYLVALGCIKPLCDLLTVMDSKIVQVALNGLENILRLGEQESKQNGIGINPYCALIEEAYGLDKIEFLQSHENQEIYQKAFDLIEHYFGVEEDDPSIVPQVDENQQQFIFQQQEAPMDGFQL</sequence>
<organism>
    <name type="scientific">Homo sapiens</name>
    <name type="common">Human</name>
    <dbReference type="NCBI Taxonomy" id="9606"/>
    <lineage>
        <taxon>Eukaryota</taxon>
        <taxon>Metazoa</taxon>
        <taxon>Chordata</taxon>
        <taxon>Craniata</taxon>
        <taxon>Vertebrata</taxon>
        <taxon>Euteleostomi</taxon>
        <taxon>Mammalia</taxon>
        <taxon>Eutheria</taxon>
        <taxon>Euarchontoglires</taxon>
        <taxon>Primates</taxon>
        <taxon>Haplorrhini</taxon>
        <taxon>Catarrhini</taxon>
        <taxon>Hominidae</taxon>
        <taxon>Homo</taxon>
    </lineage>
</organism>
<gene>
    <name evidence="8" type="primary">KPNA5</name>
</gene>
<feature type="chain" id="PRO_0000120728" description="Importin subunit alpha-6">
    <location>
        <begin position="1"/>
        <end position="539"/>
    </location>
</feature>
<feature type="domain" description="IBB" evidence="3">
    <location>
        <begin position="1"/>
        <end position="60"/>
    </location>
</feature>
<feature type="repeat" description="ARM 1; truncated">
    <location>
        <begin position="76"/>
        <end position="116"/>
    </location>
</feature>
<feature type="repeat" description="ARM 2" evidence="2">
    <location>
        <begin position="117"/>
        <end position="157"/>
    </location>
</feature>
<feature type="repeat" description="ARM 3" evidence="2">
    <location>
        <begin position="160"/>
        <end position="199"/>
    </location>
</feature>
<feature type="repeat" description="ARM 4" evidence="2">
    <location>
        <begin position="202"/>
        <end position="242"/>
    </location>
</feature>
<feature type="repeat" description="ARM 5" evidence="2">
    <location>
        <begin position="245"/>
        <end position="284"/>
    </location>
</feature>
<feature type="repeat" description="ARM 6" evidence="2">
    <location>
        <begin position="287"/>
        <end position="326"/>
    </location>
</feature>
<feature type="repeat" description="ARM 7" evidence="2">
    <location>
        <begin position="329"/>
        <end position="368"/>
    </location>
</feature>
<feature type="repeat" description="ARM 8" evidence="2">
    <location>
        <begin position="371"/>
        <end position="410"/>
    </location>
</feature>
<feature type="repeat" description="ARM 9" evidence="2">
    <location>
        <begin position="414"/>
        <end position="453"/>
    </location>
</feature>
<feature type="repeat" description="ARM 10; atypical">
    <location>
        <begin position="460"/>
        <end position="505"/>
    </location>
</feature>
<feature type="region of interest" description="Disordered" evidence="4">
    <location>
        <begin position="1"/>
        <end position="40"/>
    </location>
</feature>
<feature type="region of interest" description="NLS binding site (major)" evidence="1">
    <location>
        <begin position="150"/>
        <end position="242"/>
    </location>
</feature>
<feature type="region of interest" description="NLS binding site (minor)" evidence="1">
    <location>
        <begin position="319"/>
        <end position="407"/>
    </location>
</feature>
<feature type="short sequence motif" description="Nuclear localization signal" evidence="1">
    <location>
        <begin position="45"/>
        <end position="54"/>
    </location>
</feature>
<feature type="compositionally biased region" description="Basic and acidic residues" evidence="4">
    <location>
        <begin position="26"/>
        <end position="40"/>
    </location>
</feature>
<feature type="sequence variant" id="VAR_036245" description="In a breast cancer sample; somatic mutation." evidence="5">
    <original>F</original>
    <variation>L</variation>
    <location>
        <position position="48"/>
    </location>
</feature>
<feature type="sequence variant" id="VAR_036246" description="In a breast cancer sample; somatic mutation." evidence="5">
    <original>R</original>
    <variation>S</variation>
    <location>
        <position position="319"/>
    </location>
</feature>
<feature type="sequence conflict" description="In Ref. 5; AAC51868." evidence="7" ref="5">
    <original>P</original>
    <variation>S</variation>
    <location>
        <position position="70"/>
    </location>
</feature>
<feature type="sequence conflict" description="In Ref. 5; AAC51868." evidence="7" ref="5">
    <original>E</original>
    <variation>G</variation>
    <location>
        <position position="82"/>
    </location>
</feature>
<feature type="helix" evidence="9">
    <location>
        <begin position="342"/>
        <end position="347"/>
    </location>
</feature>
<feature type="helix" evidence="9">
    <location>
        <begin position="353"/>
        <end position="367"/>
    </location>
</feature>
<feature type="helix" evidence="9">
    <location>
        <begin position="371"/>
        <end position="379"/>
    </location>
</feature>
<feature type="helix" evidence="9">
    <location>
        <begin position="383"/>
        <end position="392"/>
    </location>
</feature>
<feature type="helix" evidence="9">
    <location>
        <begin position="395"/>
        <end position="411"/>
    </location>
</feature>
<feature type="helix" evidence="9">
    <location>
        <begin position="414"/>
        <end position="423"/>
    </location>
</feature>
<feature type="helix" evidence="9">
    <location>
        <begin position="426"/>
        <end position="431"/>
    </location>
</feature>
<feature type="helix" evidence="9">
    <location>
        <begin position="432"/>
        <end position="434"/>
    </location>
</feature>
<feature type="helix" evidence="9">
    <location>
        <begin position="438"/>
        <end position="460"/>
    </location>
</feature>
<feature type="helix" evidence="9">
    <location>
        <begin position="468"/>
        <end position="475"/>
    </location>
</feature>
<feature type="helix" evidence="9">
    <location>
        <begin position="478"/>
        <end position="485"/>
    </location>
</feature>
<feature type="helix" evidence="9">
    <location>
        <begin position="491"/>
        <end position="504"/>
    </location>
</feature>
<accession>O15131</accession>
<accession>B2RAI5</accession>
<accession>Q86X23</accession>
<proteinExistence type="evidence at protein level"/>
<comment type="function">
    <text>Functions in nuclear protein import as an adapter protein for nuclear receptor KPNB1. Binds specifically and directly to substrates containing either a simple or bipartite NLS motif. Docking of the importin/substrate complex to the nuclear pore complex (NPC) is mediated by KPNB1 through binding to nucleoporin FxFG repeats and the complex is subsequently translocated through the pore by an energy requiring, Ran-dependent mechanism. At the nucleoplasmic side of the NPC, Ran binds to importin-beta and the three components separate and importin-alpha and -beta are re-exported from the nucleus to the cytoplasm where GTP hydrolysis releases Ran from importin. The directionality of nuclear import is thought to be conferred by an asymmetric distribution of the GTP- and GDP-bound forms of Ran between the cytoplasm and nucleus. Mediates nuclear import of STAT1 homodimers and STAT1/STAT2 heterodimers by recognizing non-classical NLSs of STAT1 and STAT2 through ARM repeats 8-9. Recognizes influenza A virus nucleoprotein through ARM repeat 7-9 In vitro, mediates the nuclear import of human cytomegalovirus UL84 by recognizing a non-classical NLS.</text>
</comment>
<comment type="subunit">
    <text>Forms a complex with importin subunit beta-1.</text>
</comment>
<comment type="subunit">
    <text evidence="6">(Microbial infection) Interacts with ebolavirus protein VP24.</text>
</comment>
<comment type="interaction">
    <interactant intactId="EBI-540602">
        <id>O15131</id>
    </interactant>
    <interactant intactId="EBI-3834328">
        <id>Q9GZX7</id>
        <label>AICDA</label>
    </interactant>
    <organismsDiffer>false</organismsDiffer>
    <experiments>2</experiments>
</comment>
<comment type="interaction">
    <interactant intactId="EBI-540602">
        <id>O15131</id>
    </interactant>
    <interactant intactId="EBI-762428">
        <id>Q92688</id>
        <label>ANP32B</label>
    </interactant>
    <organismsDiffer>false</organismsDiffer>
    <experiments>7</experiments>
</comment>
<comment type="interaction">
    <interactant intactId="EBI-540602">
        <id>O15131</id>
    </interactant>
    <interactant intactId="EBI-745689">
        <id>Q7L5A3</id>
        <label>ATOSB</label>
    </interactant>
    <organismsDiffer>false</organismsDiffer>
    <experiments>3</experiments>
</comment>
<comment type="interaction">
    <interactant intactId="EBI-540602">
        <id>O15131</id>
    </interactant>
    <interactant intactId="EBI-519280">
        <id>P46527</id>
        <label>CDKN1B</label>
    </interactant>
    <organismsDiffer>false</organismsDiffer>
    <experiments>6</experiments>
</comment>
<comment type="interaction">
    <interactant intactId="EBI-540602">
        <id>O15131</id>
    </interactant>
    <interactant intactId="EBI-349854">
        <id>P13569</id>
        <label>CFTR</label>
    </interactant>
    <organismsDiffer>false</organismsDiffer>
    <experiments>4</experiments>
</comment>
<comment type="interaction">
    <interactant intactId="EBI-540602">
        <id>O15131</id>
    </interactant>
    <interactant intactId="EBI-3917181">
        <id>Q96C86</id>
        <label>DCPS</label>
    </interactant>
    <organismsDiffer>false</organismsDiffer>
    <experiments>3</experiments>
</comment>
<comment type="interaction">
    <interactant intactId="EBI-540602">
        <id>O15131</id>
    </interactant>
    <interactant intactId="EBI-357966">
        <id>P07910</id>
        <label>HNRNPC</label>
    </interactant>
    <organismsDiffer>false</organismsDiffer>
    <experiments>3</experiments>
</comment>
<comment type="interaction">
    <interactant intactId="EBI-540602">
        <id>O15131</id>
    </interactant>
    <interactant intactId="EBI-399080">
        <id>Q92993</id>
        <label>KAT5</label>
    </interactant>
    <organismsDiffer>false</organismsDiffer>
    <experiments>3</experiments>
</comment>
<comment type="interaction">
    <interactant intactId="EBI-540602">
        <id>O15131</id>
    </interactant>
    <interactant intactId="EBI-968218">
        <id>P20700</id>
        <label>LMNB1</label>
    </interactant>
    <organismsDiffer>false</organismsDiffer>
    <experiments>3</experiments>
</comment>
<comment type="interaction">
    <interactant intactId="EBI-540602">
        <id>O15131</id>
    </interactant>
    <interactant intactId="EBI-744248">
        <id>P40692</id>
        <label>MLH1</label>
    </interactant>
    <organismsDiffer>false</organismsDiffer>
    <experiments>3</experiments>
</comment>
<comment type="interaction">
    <interactant intactId="EBI-540602">
        <id>O15131</id>
    </interactant>
    <interactant intactId="EBI-3917542">
        <id>Q9HAN9</id>
        <label>NMNAT1</label>
    </interactant>
    <organismsDiffer>false</organismsDiffer>
    <experiments>3</experiments>
</comment>
<comment type="interaction">
    <interactant intactId="EBI-540602">
        <id>O15131</id>
    </interactant>
    <interactant intactId="EBI-11742836">
        <id>Q16656-4</id>
        <label>NRF1</label>
    </interactant>
    <organismsDiffer>false</organismsDiffer>
    <experiments>3</experiments>
</comment>
<comment type="interaction">
    <interactant intactId="EBI-540602">
        <id>O15131</id>
    </interactant>
    <interactant intactId="EBI-2371082">
        <id>Q9UKX7</id>
        <label>NUP50</label>
    </interactant>
    <organismsDiffer>false</organismsDiffer>
    <experiments>11</experiments>
</comment>
<comment type="interaction">
    <interactant intactId="EBI-540602">
        <id>O15131</id>
    </interactant>
    <interactant intactId="EBI-5452779">
        <id>Q9BUI4</id>
        <label>POLR3C</label>
    </interactant>
    <organismsDiffer>false</organismsDiffer>
    <experiments>5</experiments>
</comment>
<comment type="interaction">
    <interactant intactId="EBI-540602">
        <id>O15131</id>
    </interactant>
    <interactant intactId="EBI-12029004">
        <id>P78424</id>
        <label>POU6F2</label>
    </interactant>
    <organismsDiffer>false</organismsDiffer>
    <experiments>3</experiments>
</comment>
<comment type="interaction">
    <interactant intactId="EBI-540602">
        <id>O15131</id>
    </interactant>
    <interactant intactId="EBI-706448">
        <id>P43351</id>
        <label>RAD52</label>
    </interactant>
    <organismsDiffer>false</organismsDiffer>
    <experiments>3</experiments>
</comment>
<comment type="interaction">
    <interactant intactId="EBI-540602">
        <id>O15131</id>
    </interactant>
    <interactant intactId="EBI-2822161">
        <id>Q6IQ16</id>
        <label>SPOPL</label>
    </interactant>
    <organismsDiffer>false</organismsDiffer>
    <experiments>5</experiments>
</comment>
<comment type="interaction">
    <interactant intactId="EBI-540602">
        <id>O15131</id>
    </interactant>
    <interactant intactId="EBI-2559824">
        <id>Q7Z6J9</id>
        <label>TSEN54</label>
    </interactant>
    <organismsDiffer>false</organismsDiffer>
    <experiments>3</experiments>
</comment>
<comment type="interaction">
    <interactant intactId="EBI-540602">
        <id>O15131</id>
    </interactant>
    <interactant intactId="EBI-2560158">
        <id>Q5BKZ1</id>
        <label>ZNF326</label>
    </interactant>
    <organismsDiffer>false</organismsDiffer>
    <experiments>3</experiments>
</comment>
<comment type="subcellular location">
    <subcellularLocation>
        <location>Cytoplasm</location>
    </subcellularLocation>
</comment>
<comment type="tissue specificity">
    <text>Testis.</text>
</comment>
<comment type="domain">
    <text>Consists of an N-terminal hydrophilic region, a hydrophobic central region composed of 10 repeats, and a short hydrophilic C-terminus. The N-terminal hydrophilic region contains the importin beta binding domain (IBB domain), which is sufficient for binding importin beta and essential for nuclear protein import.</text>
</comment>
<comment type="domain">
    <text evidence="1">The IBB domain is thought to act as an intrasteric autoregulatory sequence by interacting with the internal autoinhibitory NLS. Binding of KPNB1 probably overlaps the internal NLS and contributes to a high affinity for cytoplasmic NLS-containing cargo substrates. After dissociation of the importin/substrate complex in the nucleus the internal autohibitory NLS contributes to a low affinity for nuclear NLS-containing proteins (By similarity).</text>
</comment>
<comment type="domain">
    <text evidence="1">The major and minor NLS binding sites are mainly involved in recognition of simple or bipartite NLS motifs. Structurally located within in a helical surface groove they contain several conserved Trp and Asn residues of the corresponding third helices (H3) of ARM repeats which mainly contribute to binding (By similarity).</text>
</comment>
<comment type="similarity">
    <text evidence="7">Belongs to the importin alpha family.</text>
</comment>
<comment type="sequence caution" evidence="7">
    <conflict type="erroneous initiation">
        <sequence resource="EMBL-CDS" id="AAC51868"/>
    </conflict>
    <text>Truncated N-terminus.</text>
</comment>
<comment type="sequence caution" evidence="7">
    <conflict type="erroneous initiation">
        <sequence resource="EMBL-CDS" id="BAG36882"/>
    </conflict>
    <text>Truncated N-terminus.</text>
</comment>
<comment type="sequence caution" evidence="7">
    <conflict type="erroneous gene model prediction">
        <sequence resource="EMBL-CDS" id="EAW48216"/>
    </conflict>
</comment>
<protein>
    <recommendedName>
        <fullName evidence="7">Importin subunit alpha-6</fullName>
    </recommendedName>
    <alternativeName>
        <fullName>Karyopherin subunit alpha-5</fullName>
    </alternativeName>
</protein>
<name>IMA6_HUMAN</name>
<reference key="1">
    <citation type="journal article" date="2004" name="Nat. Genet.">
        <title>Complete sequencing and characterization of 21,243 full-length human cDNAs.</title>
        <authorList>
            <person name="Ota T."/>
            <person name="Suzuki Y."/>
            <person name="Nishikawa T."/>
            <person name="Otsuki T."/>
            <person name="Sugiyama T."/>
            <person name="Irie R."/>
            <person name="Wakamatsu A."/>
            <person name="Hayashi K."/>
            <person name="Sato H."/>
            <person name="Nagai K."/>
            <person name="Kimura K."/>
            <person name="Makita H."/>
            <person name="Sekine M."/>
            <person name="Obayashi M."/>
            <person name="Nishi T."/>
            <person name="Shibahara T."/>
            <person name="Tanaka T."/>
            <person name="Ishii S."/>
            <person name="Yamamoto J."/>
            <person name="Saito K."/>
            <person name="Kawai Y."/>
            <person name="Isono Y."/>
            <person name="Nakamura Y."/>
            <person name="Nagahari K."/>
            <person name="Murakami K."/>
            <person name="Yasuda T."/>
            <person name="Iwayanagi T."/>
            <person name="Wagatsuma M."/>
            <person name="Shiratori A."/>
            <person name="Sudo H."/>
            <person name="Hosoiri T."/>
            <person name="Kaku Y."/>
            <person name="Kodaira H."/>
            <person name="Kondo H."/>
            <person name="Sugawara M."/>
            <person name="Takahashi M."/>
            <person name="Kanda K."/>
            <person name="Yokoi T."/>
            <person name="Furuya T."/>
            <person name="Kikkawa E."/>
            <person name="Omura Y."/>
            <person name="Abe K."/>
            <person name="Kamihara K."/>
            <person name="Katsuta N."/>
            <person name="Sato K."/>
            <person name="Tanikawa M."/>
            <person name="Yamazaki M."/>
            <person name="Ninomiya K."/>
            <person name="Ishibashi T."/>
            <person name="Yamashita H."/>
            <person name="Murakawa K."/>
            <person name="Fujimori K."/>
            <person name="Tanai H."/>
            <person name="Kimata M."/>
            <person name="Watanabe M."/>
            <person name="Hiraoka S."/>
            <person name="Chiba Y."/>
            <person name="Ishida S."/>
            <person name="Ono Y."/>
            <person name="Takiguchi S."/>
            <person name="Watanabe S."/>
            <person name="Yosida M."/>
            <person name="Hotuta T."/>
            <person name="Kusano J."/>
            <person name="Kanehori K."/>
            <person name="Takahashi-Fujii A."/>
            <person name="Hara H."/>
            <person name="Tanase T.-O."/>
            <person name="Nomura Y."/>
            <person name="Togiya S."/>
            <person name="Komai F."/>
            <person name="Hara R."/>
            <person name="Takeuchi K."/>
            <person name="Arita M."/>
            <person name="Imose N."/>
            <person name="Musashino K."/>
            <person name="Yuuki H."/>
            <person name="Oshima A."/>
            <person name="Sasaki N."/>
            <person name="Aotsuka S."/>
            <person name="Yoshikawa Y."/>
            <person name="Matsunawa H."/>
            <person name="Ichihara T."/>
            <person name="Shiohata N."/>
            <person name="Sano S."/>
            <person name="Moriya S."/>
            <person name="Momiyama H."/>
            <person name="Satoh N."/>
            <person name="Takami S."/>
            <person name="Terashima Y."/>
            <person name="Suzuki O."/>
            <person name="Nakagawa S."/>
            <person name="Senoh A."/>
            <person name="Mizoguchi H."/>
            <person name="Goto Y."/>
            <person name="Shimizu F."/>
            <person name="Wakebe H."/>
            <person name="Hishigaki H."/>
            <person name="Watanabe T."/>
            <person name="Sugiyama A."/>
            <person name="Takemoto M."/>
            <person name="Kawakami B."/>
            <person name="Yamazaki M."/>
            <person name="Watanabe K."/>
            <person name="Kumagai A."/>
            <person name="Itakura S."/>
            <person name="Fukuzumi Y."/>
            <person name="Fujimori Y."/>
            <person name="Komiyama M."/>
            <person name="Tashiro H."/>
            <person name="Tanigami A."/>
            <person name="Fujiwara T."/>
            <person name="Ono T."/>
            <person name="Yamada K."/>
            <person name="Fujii Y."/>
            <person name="Ozaki K."/>
            <person name="Hirao M."/>
            <person name="Ohmori Y."/>
            <person name="Kawabata A."/>
            <person name="Hikiji T."/>
            <person name="Kobatake N."/>
            <person name="Inagaki H."/>
            <person name="Ikema Y."/>
            <person name="Okamoto S."/>
            <person name="Okitani R."/>
            <person name="Kawakami T."/>
            <person name="Noguchi S."/>
            <person name="Itoh T."/>
            <person name="Shigeta K."/>
            <person name="Senba T."/>
            <person name="Matsumura K."/>
            <person name="Nakajima Y."/>
            <person name="Mizuno T."/>
            <person name="Morinaga M."/>
            <person name="Sasaki M."/>
            <person name="Togashi T."/>
            <person name="Oyama M."/>
            <person name="Hata H."/>
            <person name="Watanabe M."/>
            <person name="Komatsu T."/>
            <person name="Mizushima-Sugano J."/>
            <person name="Satoh T."/>
            <person name="Shirai Y."/>
            <person name="Takahashi Y."/>
            <person name="Nakagawa K."/>
            <person name="Okumura K."/>
            <person name="Nagase T."/>
            <person name="Nomura N."/>
            <person name="Kikuchi H."/>
            <person name="Masuho Y."/>
            <person name="Yamashita R."/>
            <person name="Nakai K."/>
            <person name="Yada T."/>
            <person name="Nakamura Y."/>
            <person name="Ohara O."/>
            <person name="Isogai T."/>
            <person name="Sugano S."/>
        </authorList>
    </citation>
    <scope>NUCLEOTIDE SEQUENCE [LARGE SCALE MRNA]</scope>
    <source>
        <tissue>Testis</tissue>
    </source>
</reference>
<reference key="2">
    <citation type="journal article" date="2003" name="Nature">
        <title>The DNA sequence and analysis of human chromosome 6.</title>
        <authorList>
            <person name="Mungall A.J."/>
            <person name="Palmer S.A."/>
            <person name="Sims S.K."/>
            <person name="Edwards C.A."/>
            <person name="Ashurst J.L."/>
            <person name="Wilming L."/>
            <person name="Jones M.C."/>
            <person name="Horton R."/>
            <person name="Hunt S.E."/>
            <person name="Scott C.E."/>
            <person name="Gilbert J.G.R."/>
            <person name="Clamp M.E."/>
            <person name="Bethel G."/>
            <person name="Milne S."/>
            <person name="Ainscough R."/>
            <person name="Almeida J.P."/>
            <person name="Ambrose K.D."/>
            <person name="Andrews T.D."/>
            <person name="Ashwell R.I.S."/>
            <person name="Babbage A.K."/>
            <person name="Bagguley C.L."/>
            <person name="Bailey J."/>
            <person name="Banerjee R."/>
            <person name="Barker D.J."/>
            <person name="Barlow K.F."/>
            <person name="Bates K."/>
            <person name="Beare D.M."/>
            <person name="Beasley H."/>
            <person name="Beasley O."/>
            <person name="Bird C.P."/>
            <person name="Blakey S.E."/>
            <person name="Bray-Allen S."/>
            <person name="Brook J."/>
            <person name="Brown A.J."/>
            <person name="Brown J.Y."/>
            <person name="Burford D.C."/>
            <person name="Burrill W."/>
            <person name="Burton J."/>
            <person name="Carder C."/>
            <person name="Carter N.P."/>
            <person name="Chapman J.C."/>
            <person name="Clark S.Y."/>
            <person name="Clark G."/>
            <person name="Clee C.M."/>
            <person name="Clegg S."/>
            <person name="Cobley V."/>
            <person name="Collier R.E."/>
            <person name="Collins J.E."/>
            <person name="Colman L.K."/>
            <person name="Corby N.R."/>
            <person name="Coville G.J."/>
            <person name="Culley K.M."/>
            <person name="Dhami P."/>
            <person name="Davies J."/>
            <person name="Dunn M."/>
            <person name="Earthrowl M.E."/>
            <person name="Ellington A.E."/>
            <person name="Evans K.A."/>
            <person name="Faulkner L."/>
            <person name="Francis M.D."/>
            <person name="Frankish A."/>
            <person name="Frankland J."/>
            <person name="French L."/>
            <person name="Garner P."/>
            <person name="Garnett J."/>
            <person name="Ghori M.J."/>
            <person name="Gilby L.M."/>
            <person name="Gillson C.J."/>
            <person name="Glithero R.J."/>
            <person name="Grafham D.V."/>
            <person name="Grant M."/>
            <person name="Gribble S."/>
            <person name="Griffiths C."/>
            <person name="Griffiths M.N.D."/>
            <person name="Hall R."/>
            <person name="Halls K.S."/>
            <person name="Hammond S."/>
            <person name="Harley J.L."/>
            <person name="Hart E.A."/>
            <person name="Heath P.D."/>
            <person name="Heathcott R."/>
            <person name="Holmes S.J."/>
            <person name="Howden P.J."/>
            <person name="Howe K.L."/>
            <person name="Howell G.R."/>
            <person name="Huckle E."/>
            <person name="Humphray S.J."/>
            <person name="Humphries M.D."/>
            <person name="Hunt A.R."/>
            <person name="Johnson C.M."/>
            <person name="Joy A.A."/>
            <person name="Kay M."/>
            <person name="Keenan S.J."/>
            <person name="Kimberley A.M."/>
            <person name="King A."/>
            <person name="Laird G.K."/>
            <person name="Langford C."/>
            <person name="Lawlor S."/>
            <person name="Leongamornlert D.A."/>
            <person name="Leversha M."/>
            <person name="Lloyd C.R."/>
            <person name="Lloyd D.M."/>
            <person name="Loveland J.E."/>
            <person name="Lovell J."/>
            <person name="Martin S."/>
            <person name="Mashreghi-Mohammadi M."/>
            <person name="Maslen G.L."/>
            <person name="Matthews L."/>
            <person name="McCann O.T."/>
            <person name="McLaren S.J."/>
            <person name="McLay K."/>
            <person name="McMurray A."/>
            <person name="Moore M.J.F."/>
            <person name="Mullikin J.C."/>
            <person name="Niblett D."/>
            <person name="Nickerson T."/>
            <person name="Novik K.L."/>
            <person name="Oliver K."/>
            <person name="Overton-Larty E.K."/>
            <person name="Parker A."/>
            <person name="Patel R."/>
            <person name="Pearce A.V."/>
            <person name="Peck A.I."/>
            <person name="Phillimore B.J.C.T."/>
            <person name="Phillips S."/>
            <person name="Plumb R.W."/>
            <person name="Porter K.M."/>
            <person name="Ramsey Y."/>
            <person name="Ranby S.A."/>
            <person name="Rice C.M."/>
            <person name="Ross M.T."/>
            <person name="Searle S.M."/>
            <person name="Sehra H.K."/>
            <person name="Sheridan E."/>
            <person name="Skuce C.D."/>
            <person name="Smith S."/>
            <person name="Smith M."/>
            <person name="Spraggon L."/>
            <person name="Squares S.L."/>
            <person name="Steward C.A."/>
            <person name="Sycamore N."/>
            <person name="Tamlyn-Hall G."/>
            <person name="Tester J."/>
            <person name="Theaker A.J."/>
            <person name="Thomas D.W."/>
            <person name="Thorpe A."/>
            <person name="Tracey A."/>
            <person name="Tromans A."/>
            <person name="Tubby B."/>
            <person name="Wall M."/>
            <person name="Wallis J.M."/>
            <person name="West A.P."/>
            <person name="White S.S."/>
            <person name="Whitehead S.L."/>
            <person name="Whittaker H."/>
            <person name="Wild A."/>
            <person name="Willey D.J."/>
            <person name="Wilmer T.E."/>
            <person name="Wood J.M."/>
            <person name="Wray P.W."/>
            <person name="Wyatt J.C."/>
            <person name="Young L."/>
            <person name="Younger R.M."/>
            <person name="Bentley D.R."/>
            <person name="Coulson A."/>
            <person name="Durbin R.M."/>
            <person name="Hubbard T."/>
            <person name="Sulston J.E."/>
            <person name="Dunham I."/>
            <person name="Rogers J."/>
            <person name="Beck S."/>
        </authorList>
    </citation>
    <scope>NUCLEOTIDE SEQUENCE [LARGE SCALE GENOMIC DNA]</scope>
</reference>
<reference key="3">
    <citation type="submission" date="2005-09" db="EMBL/GenBank/DDBJ databases">
        <authorList>
            <person name="Mural R.J."/>
            <person name="Istrail S."/>
            <person name="Sutton G.G."/>
            <person name="Florea L."/>
            <person name="Halpern A.L."/>
            <person name="Mobarry C.M."/>
            <person name="Lippert R."/>
            <person name="Walenz B."/>
            <person name="Shatkay H."/>
            <person name="Dew I."/>
            <person name="Miller J.R."/>
            <person name="Flanigan M.J."/>
            <person name="Edwards N.J."/>
            <person name="Bolanos R."/>
            <person name="Fasulo D."/>
            <person name="Halldorsson B.V."/>
            <person name="Hannenhalli S."/>
            <person name="Turner R."/>
            <person name="Yooseph S."/>
            <person name="Lu F."/>
            <person name="Nusskern D.R."/>
            <person name="Shue B.C."/>
            <person name="Zheng X.H."/>
            <person name="Zhong F."/>
            <person name="Delcher A.L."/>
            <person name="Huson D.H."/>
            <person name="Kravitz S.A."/>
            <person name="Mouchard L."/>
            <person name="Reinert K."/>
            <person name="Remington K.A."/>
            <person name="Clark A.G."/>
            <person name="Waterman M.S."/>
            <person name="Eichler E.E."/>
            <person name="Adams M.D."/>
            <person name="Hunkapiller M.W."/>
            <person name="Myers E.W."/>
            <person name="Venter J.C."/>
        </authorList>
    </citation>
    <scope>NUCLEOTIDE SEQUENCE [LARGE SCALE GENOMIC DNA]</scope>
</reference>
<reference key="4">
    <citation type="journal article" date="2004" name="Genome Res.">
        <title>The status, quality, and expansion of the NIH full-length cDNA project: the Mammalian Gene Collection (MGC).</title>
        <authorList>
            <consortium name="The MGC Project Team"/>
        </authorList>
    </citation>
    <scope>NUCLEOTIDE SEQUENCE [LARGE SCALE MRNA]</scope>
    <source>
        <tissue>Testis</tissue>
    </source>
</reference>
<reference key="5">
    <citation type="journal article" date="1997" name="FEBS Lett.">
        <title>Cloning of two novel human importin-alpha subunits and analysis of the expression pattern of the importin-alpha protein family.</title>
        <authorList>
            <person name="Koehler M."/>
            <person name="Ansieau S."/>
            <person name="Prehn S."/>
            <person name="Leutz A."/>
            <person name="Haller H."/>
            <person name="Hartmann E."/>
        </authorList>
    </citation>
    <scope>NUCLEOTIDE SEQUENCE [MRNA] OF 3-539</scope>
</reference>
<reference key="6">
    <citation type="journal article" date="2003" name="J. Biol. Chem.">
        <title>Importin alpha nuclear localization signal binding sites for STAT1, STAT2, and influenza A virus nucleoprotein.</title>
        <authorList>
            <person name="Melen K."/>
            <person name="Fagerlund R."/>
            <person name="Franke J."/>
            <person name="Koehler M."/>
            <person name="Kinnunen L."/>
            <person name="Julkunen I."/>
        </authorList>
    </citation>
    <scope>INTERACTION WITH STAT1; STAT2 AND INFLUENZA VIRUS NP</scope>
</reference>
<reference key="7">
    <citation type="journal article" date="2003" name="J. Virol.">
        <title>A nonconventional nuclear localization signal within the UL84 protein of human cytomegalovirus mediates nuclear import via the importin alpha/beta pathway.</title>
        <authorList>
            <person name="Lischka P."/>
            <person name="Sorg G."/>
            <person name="Kann M."/>
            <person name="Winkler M."/>
            <person name="Stamminger T."/>
        </authorList>
    </citation>
    <scope>INTERACTION WITH HCMV UL84</scope>
</reference>
<reference key="8">
    <citation type="journal article" date="2007" name="J. Virol.">
        <title>Ebola virus VP24 proteins inhibit the interaction of NPI-1 subfamily karyopherin alpha proteins with activated STAT1.</title>
        <authorList>
            <person name="Reid S.P."/>
            <person name="Valmas C."/>
            <person name="Martinez O."/>
            <person name="Sanchez F.M."/>
            <person name="Basler C.F."/>
        </authorList>
    </citation>
    <scope>INTERACTION WITH EBOLAVIRUS VP24 (MICROBIAL INFECTION)</scope>
</reference>
<reference key="9">
    <citation type="journal article" date="2011" name="BMC Syst. Biol.">
        <title>Initial characterization of the human central proteome.</title>
        <authorList>
            <person name="Burkard T.R."/>
            <person name="Planyavsky M."/>
            <person name="Kaupe I."/>
            <person name="Breitwieser F.P."/>
            <person name="Buerckstuemmer T."/>
            <person name="Bennett K.L."/>
            <person name="Superti-Furga G."/>
            <person name="Colinge J."/>
        </authorList>
    </citation>
    <scope>IDENTIFICATION BY MASS SPECTROMETRY [LARGE SCALE ANALYSIS]</scope>
</reference>
<reference key="10">
    <citation type="journal article" date="2006" name="Science">
        <title>The consensus coding sequences of human breast and colorectal cancers.</title>
        <authorList>
            <person name="Sjoeblom T."/>
            <person name="Jones S."/>
            <person name="Wood L.D."/>
            <person name="Parsons D.W."/>
            <person name="Lin J."/>
            <person name="Barber T.D."/>
            <person name="Mandelker D."/>
            <person name="Leary R.J."/>
            <person name="Ptak J."/>
            <person name="Silliman N."/>
            <person name="Szabo S."/>
            <person name="Buckhaults P."/>
            <person name="Farrell C."/>
            <person name="Meeh P."/>
            <person name="Markowitz S.D."/>
            <person name="Willis J."/>
            <person name="Dawson D."/>
            <person name="Willson J.K.V."/>
            <person name="Gazdar A.F."/>
            <person name="Hartigan J."/>
            <person name="Wu L."/>
            <person name="Liu C."/>
            <person name="Parmigiani G."/>
            <person name="Park B.H."/>
            <person name="Bachman K.E."/>
            <person name="Papadopoulos N."/>
            <person name="Vogelstein B."/>
            <person name="Kinzler K.W."/>
            <person name="Velculescu V.E."/>
        </authorList>
    </citation>
    <scope>VARIANTS [LARGE SCALE ANALYSIS] LEU-48 AND SER-319</scope>
</reference>
<keyword id="KW-0002">3D-structure</keyword>
<keyword id="KW-0963">Cytoplasm</keyword>
<keyword id="KW-0945">Host-virus interaction</keyword>
<keyword id="KW-0653">Protein transport</keyword>
<keyword id="KW-1267">Proteomics identification</keyword>
<keyword id="KW-1185">Reference proteome</keyword>
<keyword id="KW-0677">Repeat</keyword>
<keyword id="KW-0813">Transport</keyword>
<evidence type="ECO:0000250" key="1"/>
<evidence type="ECO:0000255" key="2"/>
<evidence type="ECO:0000255" key="3">
    <source>
        <dbReference type="PROSITE-ProRule" id="PRU00561"/>
    </source>
</evidence>
<evidence type="ECO:0000256" key="4">
    <source>
        <dbReference type="SAM" id="MobiDB-lite"/>
    </source>
</evidence>
<evidence type="ECO:0000269" key="5">
    <source>
    </source>
</evidence>
<evidence type="ECO:0000269" key="6">
    <source>
    </source>
</evidence>
<evidence type="ECO:0000305" key="7"/>
<evidence type="ECO:0000312" key="8">
    <source>
        <dbReference type="HGNC" id="HGNC:6398"/>
    </source>
</evidence>
<evidence type="ECO:0007829" key="9">
    <source>
        <dbReference type="PDB" id="4U2X"/>
    </source>
</evidence>